<dbReference type="EMBL" id="BA000018">
    <property type="protein sequence ID" value="BAB43122.1"/>
    <property type="status" value="ALT_INIT"/>
    <property type="molecule type" value="Genomic_DNA"/>
</dbReference>
<dbReference type="PIR" id="A89995">
    <property type="entry name" value="A89995"/>
</dbReference>
<dbReference type="BMRB" id="P0A0M2"/>
<dbReference type="SMR" id="P0A0M2"/>
<dbReference type="EnsemblBacteria" id="BAB43122">
    <property type="protein sequence ID" value="BAB43122"/>
    <property type="gene ID" value="BAB43122"/>
</dbReference>
<dbReference type="KEGG" id="sau:SAS065"/>
<dbReference type="HOGENOM" id="CLU_3222291_0_0_9"/>
<dbReference type="GO" id="GO:0005576">
    <property type="term" value="C:extracellular region"/>
    <property type="evidence" value="ECO:0007669"/>
    <property type="project" value="UniProtKB-SubCell"/>
</dbReference>
<dbReference type="GO" id="GO:0020002">
    <property type="term" value="C:host cell plasma membrane"/>
    <property type="evidence" value="ECO:0007669"/>
    <property type="project" value="UniProtKB-SubCell"/>
</dbReference>
<dbReference type="GO" id="GO:0016020">
    <property type="term" value="C:membrane"/>
    <property type="evidence" value="ECO:0007669"/>
    <property type="project" value="UniProtKB-KW"/>
</dbReference>
<dbReference type="GO" id="GO:0090729">
    <property type="term" value="F:toxin activity"/>
    <property type="evidence" value="ECO:0007669"/>
    <property type="project" value="UniProtKB-KW"/>
</dbReference>
<dbReference type="GO" id="GO:0019836">
    <property type="term" value="P:symbiont-mediated hemolysis of host erythrocyte"/>
    <property type="evidence" value="ECO:0007669"/>
    <property type="project" value="InterPro"/>
</dbReference>
<dbReference type="InterPro" id="IPR008034">
    <property type="entry name" value="Delta_lysin"/>
</dbReference>
<dbReference type="NCBIfam" id="NF011336">
    <property type="entry name" value="PRK14752.1-1"/>
    <property type="match status" value="1"/>
</dbReference>
<dbReference type="NCBIfam" id="NF011338">
    <property type="entry name" value="PRK14752.1-4"/>
    <property type="match status" value="1"/>
</dbReference>
<dbReference type="Pfam" id="PF05372">
    <property type="entry name" value="Delta_lysin"/>
    <property type="match status" value="1"/>
</dbReference>
<feature type="peptide" id="PRO_0000035640" description="Delta-hemolysin">
    <location>
        <begin position="1"/>
        <end position="26"/>
    </location>
</feature>
<feature type="modified residue" description="N-formylmethionine" evidence="1">
    <location>
        <position position="1"/>
    </location>
</feature>
<comment type="function">
    <text evidence="1">Lyses erythrocytes and many other mammalian cells.</text>
</comment>
<comment type="subcellular location">
    <subcellularLocation>
        <location evidence="1">Secreted</location>
    </subcellularLocation>
    <subcellularLocation>
        <location evidence="1">Host cell membrane</location>
    </subcellularLocation>
    <text evidence="1">In infected cells, it is found in the membrane.</text>
</comment>
<comment type="similarity">
    <text evidence="2">Belongs to the delta-lysin family.</text>
</comment>
<comment type="sequence caution" evidence="2">
    <conflict type="erroneous initiation">
        <sequence resource="EMBL-CDS" id="BAB43122"/>
    </conflict>
</comment>
<name>HLD_STAAN</name>
<proteinExistence type="evidence at protein level"/>
<keyword id="KW-0204">Cytolysis</keyword>
<keyword id="KW-0291">Formylation</keyword>
<keyword id="KW-0354">Hemolysis</keyword>
<keyword id="KW-1032">Host cell membrane</keyword>
<keyword id="KW-1043">Host membrane</keyword>
<keyword id="KW-0472">Membrane</keyword>
<keyword id="KW-0964">Secreted</keyword>
<keyword id="KW-0800">Toxin</keyword>
<keyword id="KW-0812">Transmembrane</keyword>
<keyword id="KW-0843">Virulence</keyword>
<protein>
    <recommendedName>
        <fullName>Delta-hemolysin</fullName>
        <shortName>Delta-lysin</shortName>
    </recommendedName>
    <alternativeName>
        <fullName>Delta-toxin</fullName>
    </alternativeName>
</protein>
<sequence>MAQDIISTIGDLVKWIIDTVNKFTKK</sequence>
<reference key="1">
    <citation type="journal article" date="2001" name="Lancet">
        <title>Whole genome sequencing of meticillin-resistant Staphylococcus aureus.</title>
        <authorList>
            <person name="Kuroda M."/>
            <person name="Ohta T."/>
            <person name="Uchiyama I."/>
            <person name="Baba T."/>
            <person name="Yuzawa H."/>
            <person name="Kobayashi I."/>
            <person name="Cui L."/>
            <person name="Oguchi A."/>
            <person name="Aoki K."/>
            <person name="Nagai Y."/>
            <person name="Lian J.-Q."/>
            <person name="Ito T."/>
            <person name="Kanamori M."/>
            <person name="Matsumaru H."/>
            <person name="Maruyama A."/>
            <person name="Murakami H."/>
            <person name="Hosoyama A."/>
            <person name="Mizutani-Ui Y."/>
            <person name="Takahashi N.K."/>
            <person name="Sawano T."/>
            <person name="Inoue R."/>
            <person name="Kaito C."/>
            <person name="Sekimizu K."/>
            <person name="Hirakawa H."/>
            <person name="Kuhara S."/>
            <person name="Goto S."/>
            <person name="Yabuzaki J."/>
            <person name="Kanehisa M."/>
            <person name="Yamashita A."/>
            <person name="Oshima K."/>
            <person name="Furuya K."/>
            <person name="Yoshino C."/>
            <person name="Shiba T."/>
            <person name="Hattori M."/>
            <person name="Ogasawara N."/>
            <person name="Hayashi H."/>
            <person name="Hiramatsu K."/>
        </authorList>
    </citation>
    <scope>NUCLEOTIDE SEQUENCE [LARGE SCALE GENOMIC DNA]</scope>
    <source>
        <strain>N315</strain>
    </source>
</reference>
<reference key="2">
    <citation type="submission" date="2007-10" db="UniProtKB">
        <title>Shotgun proteomic analysis of total and membrane protein extracts of S. aureus strain N315.</title>
        <authorList>
            <person name="Vaezzadeh A.R."/>
            <person name="Deshusses J."/>
            <person name="Lescuyer P."/>
            <person name="Hochstrasser D.F."/>
        </authorList>
    </citation>
    <scope>IDENTIFICATION BY MASS SPECTROMETRY [LARGE SCALE ANALYSIS]</scope>
    <source>
        <strain>N315</strain>
    </source>
</reference>
<gene>
    <name type="primary">hld</name>
    <name type="ordered locus">SA1841.1</name>
    <name type="ORF">SAS065</name>
</gene>
<evidence type="ECO:0000250" key="1"/>
<evidence type="ECO:0000305" key="2"/>
<accession>P0A0M2</accession>
<accession>P01506</accession>
<organism>
    <name type="scientific">Staphylococcus aureus (strain N315)</name>
    <dbReference type="NCBI Taxonomy" id="158879"/>
    <lineage>
        <taxon>Bacteria</taxon>
        <taxon>Bacillati</taxon>
        <taxon>Bacillota</taxon>
        <taxon>Bacilli</taxon>
        <taxon>Bacillales</taxon>
        <taxon>Staphylococcaceae</taxon>
        <taxon>Staphylococcus</taxon>
    </lineage>
</organism>